<dbReference type="EC" id="6.3.4.20" evidence="1"/>
<dbReference type="EMBL" id="AE015451">
    <property type="protein sequence ID" value="AAN66850.1"/>
    <property type="molecule type" value="Genomic_DNA"/>
</dbReference>
<dbReference type="RefSeq" id="NP_743386.1">
    <property type="nucleotide sequence ID" value="NC_002947.4"/>
</dbReference>
<dbReference type="RefSeq" id="WP_010952369.1">
    <property type="nucleotide sequence ID" value="NC_002947.4"/>
</dbReference>
<dbReference type="SMR" id="Q88NI3"/>
<dbReference type="STRING" id="160488.PP_1226"/>
<dbReference type="PaxDb" id="160488-PP_1226"/>
<dbReference type="KEGG" id="ppu:PP_1226"/>
<dbReference type="PATRIC" id="fig|160488.4.peg.1302"/>
<dbReference type="eggNOG" id="COG0603">
    <property type="taxonomic scope" value="Bacteria"/>
</dbReference>
<dbReference type="HOGENOM" id="CLU_081854_1_1_6"/>
<dbReference type="OrthoDB" id="9789567at2"/>
<dbReference type="PhylomeDB" id="Q88NI3"/>
<dbReference type="BioCyc" id="PPUT160488:G1G01-1311-MONOMER"/>
<dbReference type="UniPathway" id="UPA00391"/>
<dbReference type="Proteomes" id="UP000000556">
    <property type="component" value="Chromosome"/>
</dbReference>
<dbReference type="GO" id="GO:0005524">
    <property type="term" value="F:ATP binding"/>
    <property type="evidence" value="ECO:0007669"/>
    <property type="project" value="UniProtKB-UniRule"/>
</dbReference>
<dbReference type="GO" id="GO:0016879">
    <property type="term" value="F:ligase activity, forming carbon-nitrogen bonds"/>
    <property type="evidence" value="ECO:0007669"/>
    <property type="project" value="UniProtKB-UniRule"/>
</dbReference>
<dbReference type="GO" id="GO:0008270">
    <property type="term" value="F:zinc ion binding"/>
    <property type="evidence" value="ECO:0007669"/>
    <property type="project" value="UniProtKB-UniRule"/>
</dbReference>
<dbReference type="GO" id="GO:0008616">
    <property type="term" value="P:queuosine biosynthetic process"/>
    <property type="evidence" value="ECO:0007669"/>
    <property type="project" value="UniProtKB-UniRule"/>
</dbReference>
<dbReference type="CDD" id="cd01995">
    <property type="entry name" value="QueC-like"/>
    <property type="match status" value="1"/>
</dbReference>
<dbReference type="FunFam" id="3.40.50.620:FF:000131">
    <property type="entry name" value="7-cyano-7-deazaguanine synthase"/>
    <property type="match status" value="1"/>
</dbReference>
<dbReference type="Gene3D" id="3.40.50.620">
    <property type="entry name" value="HUPs"/>
    <property type="match status" value="1"/>
</dbReference>
<dbReference type="HAMAP" id="MF_01633">
    <property type="entry name" value="QueC"/>
    <property type="match status" value="1"/>
</dbReference>
<dbReference type="InterPro" id="IPR018317">
    <property type="entry name" value="QueC"/>
</dbReference>
<dbReference type="InterPro" id="IPR014729">
    <property type="entry name" value="Rossmann-like_a/b/a_fold"/>
</dbReference>
<dbReference type="NCBIfam" id="TIGR00364">
    <property type="entry name" value="7-cyano-7-deazaguanine synthase QueC"/>
    <property type="match status" value="1"/>
</dbReference>
<dbReference type="PANTHER" id="PTHR42914">
    <property type="entry name" value="7-CYANO-7-DEAZAGUANINE SYNTHASE"/>
    <property type="match status" value="1"/>
</dbReference>
<dbReference type="PANTHER" id="PTHR42914:SF1">
    <property type="entry name" value="7-CYANO-7-DEAZAGUANINE SYNTHASE"/>
    <property type="match status" value="1"/>
</dbReference>
<dbReference type="Pfam" id="PF06508">
    <property type="entry name" value="QueC"/>
    <property type="match status" value="1"/>
</dbReference>
<dbReference type="PIRSF" id="PIRSF006293">
    <property type="entry name" value="ExsB"/>
    <property type="match status" value="1"/>
</dbReference>
<dbReference type="SUPFAM" id="SSF52402">
    <property type="entry name" value="Adenine nucleotide alpha hydrolases-like"/>
    <property type="match status" value="1"/>
</dbReference>
<reference key="1">
    <citation type="journal article" date="2002" name="Environ. Microbiol.">
        <title>Complete genome sequence and comparative analysis of the metabolically versatile Pseudomonas putida KT2440.</title>
        <authorList>
            <person name="Nelson K.E."/>
            <person name="Weinel C."/>
            <person name="Paulsen I.T."/>
            <person name="Dodson R.J."/>
            <person name="Hilbert H."/>
            <person name="Martins dos Santos V.A.P."/>
            <person name="Fouts D.E."/>
            <person name="Gill S.R."/>
            <person name="Pop M."/>
            <person name="Holmes M."/>
            <person name="Brinkac L.M."/>
            <person name="Beanan M.J."/>
            <person name="DeBoy R.T."/>
            <person name="Daugherty S.C."/>
            <person name="Kolonay J.F."/>
            <person name="Madupu R."/>
            <person name="Nelson W.C."/>
            <person name="White O."/>
            <person name="Peterson J.D."/>
            <person name="Khouri H.M."/>
            <person name="Hance I."/>
            <person name="Chris Lee P."/>
            <person name="Holtzapple E.K."/>
            <person name="Scanlan D."/>
            <person name="Tran K."/>
            <person name="Moazzez A."/>
            <person name="Utterback T.R."/>
            <person name="Rizzo M."/>
            <person name="Lee K."/>
            <person name="Kosack D."/>
            <person name="Moestl D."/>
            <person name="Wedler H."/>
            <person name="Lauber J."/>
            <person name="Stjepandic D."/>
            <person name="Hoheisel J."/>
            <person name="Straetz M."/>
            <person name="Heim S."/>
            <person name="Kiewitz C."/>
            <person name="Eisen J.A."/>
            <person name="Timmis K.N."/>
            <person name="Duesterhoeft A."/>
            <person name="Tuemmler B."/>
            <person name="Fraser C.M."/>
        </authorList>
    </citation>
    <scope>NUCLEOTIDE SEQUENCE [LARGE SCALE GENOMIC DNA]</scope>
    <source>
        <strain>ATCC 47054 / DSM 6125 / CFBP 8728 / NCIMB 11950 / KT2440</strain>
    </source>
</reference>
<name>QUEC_PSEPK</name>
<sequence length="224" mass="23961">MTEKRAVILLSGGLDSATVVAMAKAEGYSCYTMSFDYGQRHRAELNAAARVARDLGVVEHKVIGLNLDGIGGSALTDSSIDVPEAPGEGIPVTYVPARNTVFLSLALGWAEVLEARDIFIGVNAVDYSGYPDCRPEFVEAFERMANLATKAGVEGQGFRIQAPLQNMSKAQIVQAGMARGVDYSLTVSCYQADDDGRACGKCDSCRLRADGFKAAGIEDPTRYF</sequence>
<comment type="function">
    <text evidence="1">Catalyzes the ATP-dependent conversion of 7-carboxy-7-deazaguanine (CDG) to 7-cyano-7-deazaguanine (preQ(0)).</text>
</comment>
<comment type="catalytic activity">
    <reaction evidence="1">
        <text>7-carboxy-7-deazaguanine + NH4(+) + ATP = 7-cyano-7-deazaguanine + ADP + phosphate + H2O + H(+)</text>
        <dbReference type="Rhea" id="RHEA:27982"/>
        <dbReference type="ChEBI" id="CHEBI:15377"/>
        <dbReference type="ChEBI" id="CHEBI:15378"/>
        <dbReference type="ChEBI" id="CHEBI:28938"/>
        <dbReference type="ChEBI" id="CHEBI:30616"/>
        <dbReference type="ChEBI" id="CHEBI:43474"/>
        <dbReference type="ChEBI" id="CHEBI:45075"/>
        <dbReference type="ChEBI" id="CHEBI:61036"/>
        <dbReference type="ChEBI" id="CHEBI:456216"/>
        <dbReference type="EC" id="6.3.4.20"/>
    </reaction>
</comment>
<comment type="cofactor">
    <cofactor evidence="1">
        <name>Zn(2+)</name>
        <dbReference type="ChEBI" id="CHEBI:29105"/>
    </cofactor>
    <text evidence="1">Binds 1 zinc ion per subunit.</text>
</comment>
<comment type="pathway">
    <text evidence="1">Purine metabolism; 7-cyano-7-deazaguanine biosynthesis.</text>
</comment>
<comment type="similarity">
    <text evidence="1">Belongs to the QueC family.</text>
</comment>
<evidence type="ECO:0000255" key="1">
    <source>
        <dbReference type="HAMAP-Rule" id="MF_01633"/>
    </source>
</evidence>
<protein>
    <recommendedName>
        <fullName evidence="1">7-cyano-7-deazaguanine synthase</fullName>
        <ecNumber evidence="1">6.3.4.20</ecNumber>
    </recommendedName>
    <alternativeName>
        <fullName evidence="1">7-cyano-7-carbaguanine synthase</fullName>
    </alternativeName>
    <alternativeName>
        <fullName evidence="1">PreQ(0) synthase</fullName>
    </alternativeName>
    <alternativeName>
        <fullName evidence="1">Queuosine biosynthesis protein QueC</fullName>
    </alternativeName>
</protein>
<gene>
    <name evidence="1" type="primary">queC</name>
    <name type="ordered locus">PP_1226</name>
</gene>
<feature type="chain" id="PRO_0000246889" description="7-cyano-7-deazaguanine synthase">
    <location>
        <begin position="1"/>
        <end position="224"/>
    </location>
</feature>
<feature type="binding site" evidence="1">
    <location>
        <begin position="10"/>
        <end position="20"/>
    </location>
    <ligand>
        <name>ATP</name>
        <dbReference type="ChEBI" id="CHEBI:30616"/>
    </ligand>
</feature>
<feature type="binding site" evidence="1">
    <location>
        <position position="189"/>
    </location>
    <ligand>
        <name>Zn(2+)</name>
        <dbReference type="ChEBI" id="CHEBI:29105"/>
    </ligand>
</feature>
<feature type="binding site" evidence="1">
    <location>
        <position position="199"/>
    </location>
    <ligand>
        <name>Zn(2+)</name>
        <dbReference type="ChEBI" id="CHEBI:29105"/>
    </ligand>
</feature>
<feature type="binding site" evidence="1">
    <location>
        <position position="202"/>
    </location>
    <ligand>
        <name>Zn(2+)</name>
        <dbReference type="ChEBI" id="CHEBI:29105"/>
    </ligand>
</feature>
<feature type="binding site" evidence="1">
    <location>
        <position position="205"/>
    </location>
    <ligand>
        <name>Zn(2+)</name>
        <dbReference type="ChEBI" id="CHEBI:29105"/>
    </ligand>
</feature>
<organism>
    <name type="scientific">Pseudomonas putida (strain ATCC 47054 / DSM 6125 / CFBP 8728 / NCIMB 11950 / KT2440)</name>
    <dbReference type="NCBI Taxonomy" id="160488"/>
    <lineage>
        <taxon>Bacteria</taxon>
        <taxon>Pseudomonadati</taxon>
        <taxon>Pseudomonadota</taxon>
        <taxon>Gammaproteobacteria</taxon>
        <taxon>Pseudomonadales</taxon>
        <taxon>Pseudomonadaceae</taxon>
        <taxon>Pseudomonas</taxon>
    </lineage>
</organism>
<proteinExistence type="inferred from homology"/>
<keyword id="KW-0067">ATP-binding</keyword>
<keyword id="KW-0436">Ligase</keyword>
<keyword id="KW-0479">Metal-binding</keyword>
<keyword id="KW-0547">Nucleotide-binding</keyword>
<keyword id="KW-0671">Queuosine biosynthesis</keyword>
<keyword id="KW-1185">Reference proteome</keyword>
<keyword id="KW-0862">Zinc</keyword>
<accession>Q88NI3</accession>